<organismHost>
    <name type="scientific">Gallus gallus</name>
    <name type="common">Chicken</name>
    <dbReference type="NCBI Taxonomy" id="9031"/>
</organismHost>
<accession>Q05099</accession>
<dbReference type="EMBL" id="M80595">
    <property type="protein sequence ID" value="AAB59893.1"/>
    <property type="molecule type" value="Genomic_DNA"/>
</dbReference>
<dbReference type="InterPro" id="IPR009823">
    <property type="entry name" value="Herpes_SORF3"/>
</dbReference>
<dbReference type="Pfam" id="PF07153">
    <property type="entry name" value="Marek_SORF3"/>
    <property type="match status" value="1"/>
</dbReference>
<reference key="1">
    <citation type="journal article" date="1992" name="Virus Genes">
        <title>Sequence determination and genetic content of an 8.9-kb restriction fragment in the short unique region and the internal inverted repeat of Marek's disease virus type 1 DNA.</title>
        <authorList>
            <person name="Sakaguchi M."/>
            <person name="Urakawa T."/>
            <person name="Hirayama Y."/>
            <person name="Miki N."/>
            <person name="Yamamoto M."/>
            <person name="Hirai K."/>
        </authorList>
    </citation>
    <scope>NUCLEOTIDE SEQUENCE [GENOMIC DNA]</scope>
</reference>
<gene>
    <name type="primary">US1053</name>
</gene>
<organism>
    <name type="scientific">Gallid herpesvirus 2 (strain GA)</name>
    <name type="common">GaHV-2</name>
    <name type="synonym">Marek's disease herpesvirus type 1</name>
    <dbReference type="NCBI Taxonomy" id="10388"/>
    <lineage>
        <taxon>Viruses</taxon>
        <taxon>Duplodnaviria</taxon>
        <taxon>Heunggongvirae</taxon>
        <taxon>Peploviricota</taxon>
        <taxon>Herviviricetes</taxon>
        <taxon>Herpesvirales</taxon>
        <taxon>Orthoherpesviridae</taxon>
        <taxon>Alphaherpesvirinae</taxon>
        <taxon>Mardivirus</taxon>
        <taxon>Mardivirus gallidalpha2</taxon>
        <taxon>Gallid alphaherpesvirus 2</taxon>
    </lineage>
</organism>
<proteinExistence type="predicted"/>
<protein>
    <recommendedName>
        <fullName>Uncharacterized 40.6 kDa protein</fullName>
    </recommendedName>
</protein>
<name>U1053_GAHVG</name>
<sequence>MSRVNATMFDDMDIPRGRFGKPPRKITNVNFWHVVVDEFTEGIVQCMEARERLGLLCTISTNEGSITSFDIHKDMWCQMVIWSAYRFFAIMDKMFSIETITNFTETDVTETGQWRIFYRTWDVRDALKMKQVGPFLPALFSFHLENWTTMLSIGINKGYDRHNTRNMFMTIQSARNVLSGAIEVARYAVVLALPVCEYRTPLGLPDDSIGNAIKTCCTQMQANRLTETGISKDSGHKINDSSEEELYYRTIHDLIKPNREHCISCNIENSMDIDPTIHHRSSNVITLQGTSTYPFGRRPMSRMDVGGLMYQHPYICRNLHLRPPRSRLMNSKILQTFRQSFNRSNPHAYPI</sequence>
<feature type="chain" id="PRO_0000116348" description="Uncharacterized 40.6 kDa protein">
    <location>
        <begin position="1"/>
        <end position="351"/>
    </location>
</feature>